<keyword id="KW-1185">Reference proteome</keyword>
<reference key="1">
    <citation type="submission" date="1995-08" db="EMBL/GenBank/DDBJ databases">
        <authorList>
            <person name="Robison K."/>
            <person name="O'Keeffe T."/>
            <person name="Church G.M."/>
        </authorList>
    </citation>
    <scope>NUCLEOTIDE SEQUENCE [GENOMIC DNA]</scope>
    <source>
        <strain>K12 / EMG2</strain>
    </source>
</reference>
<reference key="2">
    <citation type="journal article" date="1996" name="DNA Res.">
        <title>A 460-kb DNA sequence of the Escherichia coli K-12 genome corresponding to the 40.1-50.0 min region on the linkage map.</title>
        <authorList>
            <person name="Itoh T."/>
            <person name="Aiba H."/>
            <person name="Baba T."/>
            <person name="Fujita K."/>
            <person name="Hayashi K."/>
            <person name="Inada T."/>
            <person name="Isono K."/>
            <person name="Kasai H."/>
            <person name="Kimura S."/>
            <person name="Kitakawa M."/>
            <person name="Kitagawa M."/>
            <person name="Makino K."/>
            <person name="Miki T."/>
            <person name="Mizobuchi K."/>
            <person name="Mori H."/>
            <person name="Mori T."/>
            <person name="Motomura K."/>
            <person name="Nakade S."/>
            <person name="Nakamura Y."/>
            <person name="Nashimoto H."/>
            <person name="Nishio Y."/>
            <person name="Oshima T."/>
            <person name="Saito N."/>
            <person name="Sampei G."/>
            <person name="Seki Y."/>
            <person name="Sivasundaram S."/>
            <person name="Tagami H."/>
            <person name="Takeda J."/>
            <person name="Takemoto K."/>
            <person name="Wada C."/>
            <person name="Yamamoto Y."/>
            <person name="Horiuchi T."/>
        </authorList>
    </citation>
    <scope>NUCLEOTIDE SEQUENCE [LARGE SCALE GENOMIC DNA]</scope>
    <source>
        <strain>K12 / W3110 / ATCC 27325 / DSM 5911</strain>
    </source>
</reference>
<reference key="3">
    <citation type="journal article" date="1997" name="Science">
        <title>The complete genome sequence of Escherichia coli K-12.</title>
        <authorList>
            <person name="Blattner F.R."/>
            <person name="Plunkett G. III"/>
            <person name="Bloch C.A."/>
            <person name="Perna N.T."/>
            <person name="Burland V."/>
            <person name="Riley M."/>
            <person name="Collado-Vides J."/>
            <person name="Glasner J.D."/>
            <person name="Rode C.K."/>
            <person name="Mayhew G.F."/>
            <person name="Gregor J."/>
            <person name="Davis N.W."/>
            <person name="Kirkpatrick H.A."/>
            <person name="Goeden M.A."/>
            <person name="Rose D.J."/>
            <person name="Mau B."/>
            <person name="Shao Y."/>
        </authorList>
    </citation>
    <scope>NUCLEOTIDE SEQUENCE [LARGE SCALE GENOMIC DNA]</scope>
    <source>
        <strain>K12 / MG1655 / ATCC 47076</strain>
    </source>
</reference>
<reference key="4">
    <citation type="journal article" date="2006" name="Mol. Syst. Biol.">
        <title>Highly accurate genome sequences of Escherichia coli K-12 strains MG1655 and W3110.</title>
        <authorList>
            <person name="Hayashi K."/>
            <person name="Morooka N."/>
            <person name="Yamamoto Y."/>
            <person name="Fujita K."/>
            <person name="Isono K."/>
            <person name="Choi S."/>
            <person name="Ohtsubo E."/>
            <person name="Baba T."/>
            <person name="Wanner B.L."/>
            <person name="Mori H."/>
            <person name="Horiuchi T."/>
        </authorList>
    </citation>
    <scope>NUCLEOTIDE SEQUENCE [LARGE SCALE GENOMIC DNA]</scope>
    <source>
        <strain>K12 / W3110 / ATCC 27325 / DSM 5911</strain>
    </source>
</reference>
<protein>
    <recommendedName>
        <fullName>Uncharacterized protein YecH</fullName>
    </recommendedName>
</protein>
<name>YECH_ECOLI</name>
<evidence type="ECO:0000305" key="1"/>
<dbReference type="EMBL" id="U35066">
    <property type="protein sequence ID" value="AAA79048.1"/>
    <property type="status" value="ALT_INIT"/>
    <property type="molecule type" value="Genomic_DNA"/>
</dbReference>
<dbReference type="EMBL" id="U00096">
    <property type="protein sequence ID" value="AAC74976.1"/>
    <property type="molecule type" value="Genomic_DNA"/>
</dbReference>
<dbReference type="EMBL" id="AP009048">
    <property type="protein sequence ID" value="BAA15729.1"/>
    <property type="molecule type" value="Genomic_DNA"/>
</dbReference>
<dbReference type="PIR" id="B64954">
    <property type="entry name" value="B64954"/>
</dbReference>
<dbReference type="RefSeq" id="NP_416419.1">
    <property type="nucleotide sequence ID" value="NC_000913.3"/>
</dbReference>
<dbReference type="RefSeq" id="WP_000377225.1">
    <property type="nucleotide sequence ID" value="NZ_STEB01000026.1"/>
</dbReference>
<dbReference type="SMR" id="P46887"/>
<dbReference type="BioGRID" id="4263008">
    <property type="interactions" value="13"/>
</dbReference>
<dbReference type="FunCoup" id="P46887">
    <property type="interactions" value="36"/>
</dbReference>
<dbReference type="IntAct" id="P46887">
    <property type="interactions" value="2"/>
</dbReference>
<dbReference type="STRING" id="511145.b1906"/>
<dbReference type="PaxDb" id="511145-b1906"/>
<dbReference type="EnsemblBacteria" id="AAC74976">
    <property type="protein sequence ID" value="AAC74976"/>
    <property type="gene ID" value="b1906"/>
</dbReference>
<dbReference type="GeneID" id="946411"/>
<dbReference type="KEGG" id="ecj:JW1894"/>
<dbReference type="KEGG" id="eco:b1906"/>
<dbReference type="KEGG" id="ecoc:C3026_10820"/>
<dbReference type="PATRIC" id="fig|1411691.4.peg.342"/>
<dbReference type="EchoBASE" id="EB2705"/>
<dbReference type="eggNOG" id="ENOG50333JI">
    <property type="taxonomic scope" value="Bacteria"/>
</dbReference>
<dbReference type="HOGENOM" id="CLU_172471_0_0_6"/>
<dbReference type="InParanoid" id="P46887"/>
<dbReference type="OMA" id="HEVLHMM"/>
<dbReference type="OrthoDB" id="285410at2"/>
<dbReference type="PhylomeDB" id="P46887"/>
<dbReference type="BioCyc" id="EcoCyc:G7036-MONOMER"/>
<dbReference type="PRO" id="PR:P46887"/>
<dbReference type="Proteomes" id="UP000000625">
    <property type="component" value="Chromosome"/>
</dbReference>
<dbReference type="InterPro" id="IPR019620">
    <property type="entry name" value="Metal-bd_prot_put"/>
</dbReference>
<dbReference type="NCBIfam" id="TIGR03853">
    <property type="entry name" value="matur_matur"/>
    <property type="match status" value="1"/>
</dbReference>
<dbReference type="Pfam" id="PF10678">
    <property type="entry name" value="DUF2492"/>
    <property type="match status" value="1"/>
</dbReference>
<accession>P46887</accession>
<gene>
    <name type="primary">yecH</name>
    <name type="ordered locus">b1906</name>
    <name type="ordered locus">JW1894</name>
</gene>
<comment type="sequence caution" evidence="1">
    <conflict type="erroneous initiation">
        <sequence resource="EMBL-CDS" id="AAA79048"/>
    </conflict>
</comment>
<feature type="chain" id="PRO_0000169076" description="Uncharacterized protein YecH">
    <location>
        <begin position="1"/>
        <end position="79"/>
    </location>
</feature>
<proteinExistence type="predicted"/>
<sequence length="79" mass="8629">MDSIHGHEVLNMMIESGEQYTHASLEAAIKARFGEQARFHTCSAEGMTAGELVAFLAAKGKFIPSKDGFSTDQSKICRH</sequence>
<organism>
    <name type="scientific">Escherichia coli (strain K12)</name>
    <dbReference type="NCBI Taxonomy" id="83333"/>
    <lineage>
        <taxon>Bacteria</taxon>
        <taxon>Pseudomonadati</taxon>
        <taxon>Pseudomonadota</taxon>
        <taxon>Gammaproteobacteria</taxon>
        <taxon>Enterobacterales</taxon>
        <taxon>Enterobacteriaceae</taxon>
        <taxon>Escherichia</taxon>
    </lineage>
</organism>